<evidence type="ECO:0000255" key="1">
    <source>
        <dbReference type="HAMAP-Rule" id="MF_00004"/>
    </source>
</evidence>
<comment type="function">
    <text evidence="1">Catalyzes a salvage reaction resulting in the formation of AMP, that is energically less costly than de novo synthesis.</text>
</comment>
<comment type="catalytic activity">
    <reaction evidence="1">
        <text>AMP + diphosphate = 5-phospho-alpha-D-ribose 1-diphosphate + adenine</text>
        <dbReference type="Rhea" id="RHEA:16609"/>
        <dbReference type="ChEBI" id="CHEBI:16708"/>
        <dbReference type="ChEBI" id="CHEBI:33019"/>
        <dbReference type="ChEBI" id="CHEBI:58017"/>
        <dbReference type="ChEBI" id="CHEBI:456215"/>
        <dbReference type="EC" id="2.4.2.7"/>
    </reaction>
</comment>
<comment type="pathway">
    <text evidence="1">Purine metabolism; AMP biosynthesis via salvage pathway; AMP from adenine: step 1/1.</text>
</comment>
<comment type="subunit">
    <text evidence="1">Homodimer.</text>
</comment>
<comment type="subcellular location">
    <subcellularLocation>
        <location evidence="1">Cytoplasm</location>
    </subcellularLocation>
</comment>
<comment type="similarity">
    <text evidence="1">Belongs to the purine/pyrimidine phosphoribosyltransferase family.</text>
</comment>
<protein>
    <recommendedName>
        <fullName evidence="1">Adenine phosphoribosyltransferase</fullName>
        <shortName evidence="1">APRT</shortName>
        <ecNumber evidence="1">2.4.2.7</ecNumber>
    </recommendedName>
</protein>
<feature type="chain" id="PRO_0000149367" description="Adenine phosphoribosyltransferase">
    <location>
        <begin position="1"/>
        <end position="180"/>
    </location>
</feature>
<dbReference type="EC" id="2.4.2.7" evidence="1"/>
<dbReference type="EMBL" id="AF026811">
    <property type="protein sequence ID" value="AAB82611.1"/>
    <property type="molecule type" value="Genomic_DNA"/>
</dbReference>
<dbReference type="SMR" id="O31060"/>
<dbReference type="UniPathway" id="UPA00588">
    <property type="reaction ID" value="UER00646"/>
</dbReference>
<dbReference type="GO" id="GO:0005737">
    <property type="term" value="C:cytoplasm"/>
    <property type="evidence" value="ECO:0007669"/>
    <property type="project" value="UniProtKB-SubCell"/>
</dbReference>
<dbReference type="GO" id="GO:0002055">
    <property type="term" value="F:adenine binding"/>
    <property type="evidence" value="ECO:0007669"/>
    <property type="project" value="TreeGrafter"/>
</dbReference>
<dbReference type="GO" id="GO:0003999">
    <property type="term" value="F:adenine phosphoribosyltransferase activity"/>
    <property type="evidence" value="ECO:0007669"/>
    <property type="project" value="UniProtKB-UniRule"/>
</dbReference>
<dbReference type="GO" id="GO:0016208">
    <property type="term" value="F:AMP binding"/>
    <property type="evidence" value="ECO:0007669"/>
    <property type="project" value="TreeGrafter"/>
</dbReference>
<dbReference type="GO" id="GO:0006168">
    <property type="term" value="P:adenine salvage"/>
    <property type="evidence" value="ECO:0007669"/>
    <property type="project" value="InterPro"/>
</dbReference>
<dbReference type="GO" id="GO:0044209">
    <property type="term" value="P:AMP salvage"/>
    <property type="evidence" value="ECO:0007669"/>
    <property type="project" value="UniProtKB-UniRule"/>
</dbReference>
<dbReference type="GO" id="GO:0006166">
    <property type="term" value="P:purine ribonucleoside salvage"/>
    <property type="evidence" value="ECO:0007669"/>
    <property type="project" value="UniProtKB-KW"/>
</dbReference>
<dbReference type="CDD" id="cd06223">
    <property type="entry name" value="PRTases_typeI"/>
    <property type="match status" value="1"/>
</dbReference>
<dbReference type="FunFam" id="3.40.50.2020:FF:000004">
    <property type="entry name" value="Adenine phosphoribosyltransferase"/>
    <property type="match status" value="1"/>
</dbReference>
<dbReference type="Gene3D" id="3.40.50.2020">
    <property type="match status" value="1"/>
</dbReference>
<dbReference type="HAMAP" id="MF_00004">
    <property type="entry name" value="Aden_phosphoribosyltr"/>
    <property type="match status" value="1"/>
</dbReference>
<dbReference type="InterPro" id="IPR005764">
    <property type="entry name" value="Ade_phspho_trans"/>
</dbReference>
<dbReference type="InterPro" id="IPR000836">
    <property type="entry name" value="PRibTrfase_dom"/>
</dbReference>
<dbReference type="InterPro" id="IPR029057">
    <property type="entry name" value="PRTase-like"/>
</dbReference>
<dbReference type="InterPro" id="IPR050054">
    <property type="entry name" value="UPRTase/APRTase"/>
</dbReference>
<dbReference type="NCBIfam" id="TIGR01090">
    <property type="entry name" value="apt"/>
    <property type="match status" value="1"/>
</dbReference>
<dbReference type="NCBIfam" id="NF002633">
    <property type="entry name" value="PRK02304.1-2"/>
    <property type="match status" value="1"/>
</dbReference>
<dbReference type="NCBIfam" id="NF002634">
    <property type="entry name" value="PRK02304.1-3"/>
    <property type="match status" value="1"/>
</dbReference>
<dbReference type="NCBIfam" id="NF002636">
    <property type="entry name" value="PRK02304.1-5"/>
    <property type="match status" value="1"/>
</dbReference>
<dbReference type="PANTHER" id="PTHR32315">
    <property type="entry name" value="ADENINE PHOSPHORIBOSYLTRANSFERASE"/>
    <property type="match status" value="1"/>
</dbReference>
<dbReference type="PANTHER" id="PTHR32315:SF3">
    <property type="entry name" value="ADENINE PHOSPHORIBOSYLTRANSFERASE"/>
    <property type="match status" value="1"/>
</dbReference>
<dbReference type="Pfam" id="PF00156">
    <property type="entry name" value="Pribosyltran"/>
    <property type="match status" value="1"/>
</dbReference>
<dbReference type="SUPFAM" id="SSF53271">
    <property type="entry name" value="PRTase-like"/>
    <property type="match status" value="1"/>
</dbReference>
<dbReference type="PROSITE" id="PS00103">
    <property type="entry name" value="PUR_PYR_PR_TRANSFER"/>
    <property type="match status" value="1"/>
</dbReference>
<gene>
    <name evidence="1" type="primary">apt</name>
    <name type="synonym">aptA</name>
</gene>
<name>APT_BUTFI</name>
<keyword id="KW-0963">Cytoplasm</keyword>
<keyword id="KW-0328">Glycosyltransferase</keyword>
<keyword id="KW-0660">Purine salvage</keyword>
<keyword id="KW-0808">Transferase</keyword>
<sequence length="180" mass="19663">MKKVEDYIRTIPDFPEPGIMFRDVTSILQDAEGFKLAIDEMIKLLDGVDCDVIAGAESRGFIFGAPLAYALGKPSVLVRKKGKLPCETIEKTYDLEYGTATIEMHKDAIKPGQKVVVVDDLIATGGTIEAACQLIEELGGEVSKIVFLMELAGLNGREKLKYDVASVCYLRGKIITDFLG</sequence>
<proteinExistence type="inferred from homology"/>
<accession>O31060</accession>
<reference key="1">
    <citation type="submission" date="1997-09" db="EMBL/GenBank/DDBJ databases">
        <title>Isolation, sequencing, and transcriptional analysis of the flagellins from the rumen anaerobe Butyrivibrio fibrisolvens OR77: evidence supporting post-translational modification of these flagellins.</title>
        <authorList>
            <person name="Kalmokoff M.L."/>
            <person name="Allard S."/>
            <person name="Austin J.W."/>
            <person name="Whitford M."/>
            <person name="Hefford M.A."/>
            <person name="Teather R.M."/>
        </authorList>
    </citation>
    <scope>NUCLEOTIDE SEQUENCE [GENOMIC DNA]</scope>
    <source>
        <strain>OR77</strain>
    </source>
</reference>
<organism>
    <name type="scientific">Butyrivibrio fibrisolvens</name>
    <dbReference type="NCBI Taxonomy" id="831"/>
    <lineage>
        <taxon>Bacteria</taxon>
        <taxon>Bacillati</taxon>
        <taxon>Bacillota</taxon>
        <taxon>Clostridia</taxon>
        <taxon>Lachnospirales</taxon>
        <taxon>Lachnospiraceae</taxon>
        <taxon>Butyrivibrio</taxon>
    </lineage>
</organism>